<organism>
    <name type="scientific">Rattus norvegicus</name>
    <name type="common">Rat</name>
    <dbReference type="NCBI Taxonomy" id="10116"/>
    <lineage>
        <taxon>Eukaryota</taxon>
        <taxon>Metazoa</taxon>
        <taxon>Chordata</taxon>
        <taxon>Craniata</taxon>
        <taxon>Vertebrata</taxon>
        <taxon>Euteleostomi</taxon>
        <taxon>Mammalia</taxon>
        <taxon>Eutheria</taxon>
        <taxon>Euarchontoglires</taxon>
        <taxon>Glires</taxon>
        <taxon>Rodentia</taxon>
        <taxon>Myomorpha</taxon>
        <taxon>Muroidea</taxon>
        <taxon>Muridae</taxon>
        <taxon>Murinae</taxon>
        <taxon>Rattus</taxon>
    </lineage>
</organism>
<gene>
    <name type="primary">Ppm1k</name>
</gene>
<dbReference type="EC" id="3.1.3.16" evidence="5"/>
<dbReference type="EC" id="3.1.3.52" evidence="5"/>
<dbReference type="EMBL" id="AC126722">
    <property type="status" value="NOT_ANNOTATED_CDS"/>
    <property type="molecule type" value="Genomic_DNA"/>
</dbReference>
<dbReference type="EMBL" id="CH474011">
    <property type="protein sequence ID" value="EDL88032.1"/>
    <property type="molecule type" value="Genomic_DNA"/>
</dbReference>
<dbReference type="RefSeq" id="NP_001101333.1">
    <property type="nucleotide sequence ID" value="NM_001107863.1"/>
</dbReference>
<dbReference type="RefSeq" id="XP_006236633.1">
    <property type="nucleotide sequence ID" value="XM_006236571.5"/>
</dbReference>
<dbReference type="RefSeq" id="XP_017448105.1">
    <property type="nucleotide sequence ID" value="XM_017592616.3"/>
</dbReference>
<dbReference type="RefSeq" id="XP_017448106.1">
    <property type="nucleotide sequence ID" value="XM_017592617.3"/>
</dbReference>
<dbReference type="RefSeq" id="XP_017448107.1">
    <property type="nucleotide sequence ID" value="XM_017592618.1"/>
</dbReference>
<dbReference type="RefSeq" id="XP_017448108.1">
    <property type="nucleotide sequence ID" value="XM_017592619.3"/>
</dbReference>
<dbReference type="RefSeq" id="XP_063142109.1">
    <property type="nucleotide sequence ID" value="XM_063286039.1"/>
</dbReference>
<dbReference type="RefSeq" id="XP_063142111.1">
    <property type="nucleotide sequence ID" value="XM_063286041.1"/>
</dbReference>
<dbReference type="SMR" id="A6K136"/>
<dbReference type="STRING" id="10116.ENSRNOP00000009202"/>
<dbReference type="PhosphoSitePlus" id="A6K136"/>
<dbReference type="PaxDb" id="10116-ENSRNOP00000009202"/>
<dbReference type="Ensembl" id="ENSRNOT00000009202.7">
    <property type="protein sequence ID" value="ENSRNOP00000009202.5"/>
    <property type="gene ID" value="ENSRNOG00000006893.7"/>
</dbReference>
<dbReference type="GeneID" id="312381"/>
<dbReference type="KEGG" id="rno:312381"/>
<dbReference type="AGR" id="RGD:1308501"/>
<dbReference type="CTD" id="152926"/>
<dbReference type="RGD" id="1308501">
    <property type="gene designation" value="Ppm1k"/>
</dbReference>
<dbReference type="eggNOG" id="KOG0698">
    <property type="taxonomic scope" value="Eukaryota"/>
</dbReference>
<dbReference type="GeneTree" id="ENSGT00940000156633"/>
<dbReference type="HOGENOM" id="CLU_013173_1_3_1"/>
<dbReference type="OMA" id="CHTHMKK"/>
<dbReference type="OrthoDB" id="416093at2759"/>
<dbReference type="TreeFam" id="TF354344"/>
<dbReference type="BRENDA" id="3.1.3.52">
    <property type="organism ID" value="5301"/>
</dbReference>
<dbReference type="Reactome" id="R-RNO-70895">
    <property type="pathway name" value="Branched-chain amino acid catabolism"/>
</dbReference>
<dbReference type="PRO" id="PR:A6K136"/>
<dbReference type="Proteomes" id="UP000002494">
    <property type="component" value="Chromosome 4"/>
</dbReference>
<dbReference type="Proteomes" id="UP000234681">
    <property type="component" value="Chromosome 4"/>
</dbReference>
<dbReference type="Bgee" id="ENSRNOG00000006893">
    <property type="expression patterns" value="Expressed in adult mammalian kidney and 17 other cell types or tissues"/>
</dbReference>
<dbReference type="GO" id="GO:0005759">
    <property type="term" value="C:mitochondrial matrix"/>
    <property type="evidence" value="ECO:0000266"/>
    <property type="project" value="RGD"/>
</dbReference>
<dbReference type="GO" id="GO:0030145">
    <property type="term" value="F:manganese ion binding"/>
    <property type="evidence" value="ECO:0000266"/>
    <property type="project" value="RGD"/>
</dbReference>
<dbReference type="GO" id="GO:0004722">
    <property type="term" value="F:protein serine/threonine phosphatase activity"/>
    <property type="evidence" value="ECO:0000266"/>
    <property type="project" value="RGD"/>
</dbReference>
<dbReference type="GO" id="GO:0009083">
    <property type="term" value="P:branched-chain amino acid catabolic process"/>
    <property type="evidence" value="ECO:0000266"/>
    <property type="project" value="RGD"/>
</dbReference>
<dbReference type="GO" id="GO:1902108">
    <property type="term" value="P:regulation of mitochondrial membrane permeability involved in apoptotic process"/>
    <property type="evidence" value="ECO:0000266"/>
    <property type="project" value="RGD"/>
</dbReference>
<dbReference type="CDD" id="cd00143">
    <property type="entry name" value="PP2Cc"/>
    <property type="match status" value="1"/>
</dbReference>
<dbReference type="FunFam" id="3.60.40.10:FF:000033">
    <property type="entry name" value="Protein phosphatase 1K, mitochondrial"/>
    <property type="match status" value="1"/>
</dbReference>
<dbReference type="Gene3D" id="3.60.40.10">
    <property type="entry name" value="PPM-type phosphatase domain"/>
    <property type="match status" value="1"/>
</dbReference>
<dbReference type="InterPro" id="IPR015655">
    <property type="entry name" value="PP2C"/>
</dbReference>
<dbReference type="InterPro" id="IPR000222">
    <property type="entry name" value="PP2C_BS"/>
</dbReference>
<dbReference type="InterPro" id="IPR036457">
    <property type="entry name" value="PPM-type-like_dom_sf"/>
</dbReference>
<dbReference type="InterPro" id="IPR001932">
    <property type="entry name" value="PPM-type_phosphatase-like_dom"/>
</dbReference>
<dbReference type="PANTHER" id="PTHR47992">
    <property type="entry name" value="PROTEIN PHOSPHATASE"/>
    <property type="match status" value="1"/>
</dbReference>
<dbReference type="Pfam" id="PF00481">
    <property type="entry name" value="PP2C"/>
    <property type="match status" value="1"/>
</dbReference>
<dbReference type="SMART" id="SM00331">
    <property type="entry name" value="PP2C_SIG"/>
    <property type="match status" value="1"/>
</dbReference>
<dbReference type="SMART" id="SM00332">
    <property type="entry name" value="PP2Cc"/>
    <property type="match status" value="1"/>
</dbReference>
<dbReference type="SUPFAM" id="SSF81606">
    <property type="entry name" value="PP2C-like"/>
    <property type="match status" value="1"/>
</dbReference>
<dbReference type="PROSITE" id="PS01032">
    <property type="entry name" value="PPM_1"/>
    <property type="match status" value="1"/>
</dbReference>
<dbReference type="PROSITE" id="PS51746">
    <property type="entry name" value="PPM_2"/>
    <property type="match status" value="1"/>
</dbReference>
<proteinExistence type="evidence at protein level"/>
<feature type="transit peptide" description="Mitochondrion" evidence="3">
    <location>
        <begin position="1"/>
        <end position="29"/>
    </location>
</feature>
<feature type="chain" id="PRO_0000459401" description="Protein phosphatase Mn(2+)-dependent 1K" evidence="3">
    <location>
        <begin position="30"/>
        <end position="372"/>
    </location>
</feature>
<feature type="domain" description="PPM-type phosphatase" evidence="4">
    <location>
        <begin position="94"/>
        <end position="346"/>
    </location>
</feature>
<feature type="region of interest" description="Critical for association with the BCKDH complex" evidence="2">
    <location>
        <begin position="46"/>
        <end position="61"/>
    </location>
</feature>
<feature type="binding site" evidence="2">
    <location>
        <position position="127"/>
    </location>
    <ligand>
        <name>Mn(2+)</name>
        <dbReference type="ChEBI" id="CHEBI:29035"/>
        <label>1</label>
    </ligand>
</feature>
<feature type="binding site" evidence="2">
    <location>
        <position position="127"/>
    </location>
    <ligand>
        <name>Mn(2+)</name>
        <dbReference type="ChEBI" id="CHEBI:29035"/>
        <label>2</label>
    </ligand>
</feature>
<feature type="binding site" evidence="2">
    <location>
        <position position="128"/>
    </location>
    <ligand>
        <name>Mn(2+)</name>
        <dbReference type="ChEBI" id="CHEBI:29035"/>
        <label>1</label>
    </ligand>
</feature>
<feature type="binding site" evidence="2">
    <location>
        <position position="298"/>
    </location>
    <ligand>
        <name>Mn(2+)</name>
        <dbReference type="ChEBI" id="CHEBI:29035"/>
        <label>2</label>
    </ligand>
</feature>
<feature type="binding site" evidence="2">
    <location>
        <position position="337"/>
    </location>
    <ligand>
        <name>Mn(2+)</name>
        <dbReference type="ChEBI" id="CHEBI:29035"/>
        <label>2</label>
    </ligand>
</feature>
<feature type="modified residue" description="Phosphoserine" evidence="1">
    <location>
        <position position="248"/>
    </location>
</feature>
<sequence>MLSTAFITLVRSGRNQVKKRVLLSSILLQDHRQMTPACYCSISEPRCSRFDPDGSGQPATWDNFGIWDNRIDEPILLPPSIKYGKPIPKISLENVGCASLIGKRKENEDRFGFAQLTEEVLYFAVYDGHGGPAAADFCHTHMEKCVTDLLPREKDLETVLTLAFLEIDKAFSSYAHLSADASLLTSGTTATVALLRDGVELVVASVGDSRALLCRKGKPMKLTTDHTPERKDEKERIKKCGGFVAWNSLGQPHVNGRLAMTRSIGDLDLKASGVIAEPETTRIKLYHADDSFLVLTTDGINFMVNSQEICDFVNQCHDPKEAAHAVTEQAIQYGTEDNSTAVVVPFGAWGKYKNSEITFSFSRSFASSGRWA</sequence>
<name>PPM1K_RAT</name>
<comment type="function">
    <text evidence="2 5">Serine/threonine-protein phosphatase component of macronutrients metabolism. Together with BCKDK serves as a metabolic regulatory node that coordinates branched-chain amino acids (BCAAs) and protein synthesis with glucose and lipid metabolism via two distinct phosphoprotein targets: BCKDHA/E1a subunit of the branched-chain alpha-ketoacid dehydrogenase (BCKDH) complex and ACLY, a lipogenic enzyme of Krebs cycle (By similarity) (PubMed:29779826). At high levels of branched-chain ketoacids (BCKAs), dephosphorylates and activates mitochondrial BCKDH complex, a multisubunit complex consisting of three components, heterotetrameric E1 composed of BCKDHA and BCKDHB chains, 24-meric E2 core composed of DBT and homodimeric E3 composed of DLD, each involved in different steps of BCAA catabolism. Tightly associates with the E2 subunit of BCKDH complex and dephosphorylates Ser-333 of BCKDHA chain of the E1 subunit likely through on-off binding to individual E2 subunits of the 24-meric E2 core to increase the efficiency of the dephosphorylation reaction (By similarity). Appears to dephosphorylate and inactivate cytosolic ACLY in response to changes of cellular carbohydrate abundance. Overnutrition and in particular high-fructose diet, activates MLXIPL/ChREBP leading to increased BCKDK to PPM1K ratio, phosphorylation of ACLY on Ser-454 and activation of its enzymatic activity that ultimately results in the generation of acetyl-CoA and malonyl-CoA immediate substrates of de novo lipogenesis (By similarity) (PubMed:29779826). Recognizes phosphosites having SxS or RxxS motifs and strictly depends on Mn(2+) ions for the phosphatase activity (By similarity). Regulates Ca(2+)-induced opening of mitochondrial transition pore and apoptotic cell death (By similarity).</text>
</comment>
<comment type="catalytic activity">
    <reaction evidence="2">
        <text>O-phospho-L-seryl-[3-methyl-2-oxobutanoate dehydrogenase] + H2O = L-seryl-[3-methyl-2-oxobutanoate dehydrogenase] + phosphate</text>
        <dbReference type="Rhea" id="RHEA:77247"/>
        <dbReference type="Rhea" id="RHEA-COMP:13695"/>
        <dbReference type="Rhea" id="RHEA-COMP:13696"/>
        <dbReference type="ChEBI" id="CHEBI:15377"/>
        <dbReference type="ChEBI" id="CHEBI:29999"/>
        <dbReference type="ChEBI" id="CHEBI:43474"/>
        <dbReference type="ChEBI" id="CHEBI:83421"/>
        <dbReference type="EC" id="3.1.3.52"/>
    </reaction>
    <physiologicalReaction direction="left-to-right" evidence="2">
        <dbReference type="Rhea" id="RHEA:77248"/>
    </physiologicalReaction>
</comment>
<comment type="catalytic activity">
    <reaction evidence="5">
        <text>O-phospho-L-seryl-[protein] + H2O = L-seryl-[protein] + phosphate</text>
        <dbReference type="Rhea" id="RHEA:20629"/>
        <dbReference type="Rhea" id="RHEA-COMP:9863"/>
        <dbReference type="Rhea" id="RHEA-COMP:11604"/>
        <dbReference type="ChEBI" id="CHEBI:15377"/>
        <dbReference type="ChEBI" id="CHEBI:29999"/>
        <dbReference type="ChEBI" id="CHEBI:43474"/>
        <dbReference type="ChEBI" id="CHEBI:83421"/>
        <dbReference type="EC" id="3.1.3.16"/>
    </reaction>
    <physiologicalReaction direction="left-to-right" evidence="5">
        <dbReference type="Rhea" id="RHEA:20630"/>
    </physiologicalReaction>
</comment>
<comment type="cofactor">
    <cofactor evidence="2">
        <name>Mn(2+)</name>
        <dbReference type="ChEBI" id="CHEBI:29035"/>
    </cofactor>
    <text evidence="2">Binds 2 Mn(2+) ions per subunit.</text>
</comment>
<comment type="pathway">
    <text evidence="5">Protein modification.</text>
</comment>
<comment type="subunit">
    <text evidence="2">Interacts with E1 and E2 components of the branched-chain alpha-ketoacid dehydrogenase (BCKDH) complex. Interacts with both BCKDHA and BCKDHB chains of the E1 subunit. Interacts with the 24-meric DBT/E2 core of the BCKD complex with a 1:1 stoichiometry; the N-terminal region (residues 49-61) of PPM1K and C-terminal linker of the lipoyl domain of DBT/E2 (residues 145-160) are critical for this interaction whereas the lipoyl prosthetic group is dispensable (By similarity). Competes with BCKDK for binding to DBT/E2; this interaction is modulated by branched-chain alpha-keto acids (BCKAs). At steady state, BCKDH holoenzyme preferentially binds BCKDK and BCKDHA/E1 is phosphorylated. In response to high levels of BCKAs, BCKDK is replaced by PPM1K leading to BCKDHA/E1 dephosphorylation (By similarity).</text>
</comment>
<comment type="subcellular location">
    <subcellularLocation>
        <location evidence="2 6">Mitochondrion matrix</location>
    </subcellularLocation>
    <text evidence="5">Detected in the cytosolic compartment of liver cells.</text>
</comment>
<comment type="similarity">
    <text>Belongs to the PP2C family.</text>
</comment>
<keyword id="KW-0378">Hydrolase</keyword>
<keyword id="KW-0464">Manganese</keyword>
<keyword id="KW-0479">Metal-binding</keyword>
<keyword id="KW-0496">Mitochondrion</keyword>
<keyword id="KW-0597">Phosphoprotein</keyword>
<keyword id="KW-0904">Protein phosphatase</keyword>
<keyword id="KW-1185">Reference proteome</keyword>
<keyword id="KW-0809">Transit peptide</keyword>
<reference key="1">
    <citation type="journal article" date="2004" name="Nature">
        <title>Genome sequence of the Brown Norway rat yields insights into mammalian evolution.</title>
        <authorList>
            <person name="Gibbs R.A."/>
            <person name="Weinstock G.M."/>
            <person name="Metzker M.L."/>
            <person name="Muzny D.M."/>
            <person name="Sodergren E.J."/>
            <person name="Scherer S."/>
            <person name="Scott G."/>
            <person name="Steffen D."/>
            <person name="Worley K.C."/>
            <person name="Burch P.E."/>
            <person name="Okwuonu G."/>
            <person name="Hines S."/>
            <person name="Lewis L."/>
            <person name="Deramo C."/>
            <person name="Delgado O."/>
            <person name="Dugan-Rocha S."/>
            <person name="Miner G."/>
            <person name="Morgan M."/>
            <person name="Hawes A."/>
            <person name="Gill R."/>
            <person name="Holt R.A."/>
            <person name="Adams M.D."/>
            <person name="Amanatides P.G."/>
            <person name="Baden-Tillson H."/>
            <person name="Barnstead M."/>
            <person name="Chin S."/>
            <person name="Evans C.A."/>
            <person name="Ferriera S."/>
            <person name="Fosler C."/>
            <person name="Glodek A."/>
            <person name="Gu Z."/>
            <person name="Jennings D."/>
            <person name="Kraft C.L."/>
            <person name="Nguyen T."/>
            <person name="Pfannkoch C.M."/>
            <person name="Sitter C."/>
            <person name="Sutton G.G."/>
            <person name="Venter J.C."/>
            <person name="Woodage T."/>
            <person name="Smith D."/>
            <person name="Lee H.-M."/>
            <person name="Gustafson E."/>
            <person name="Cahill P."/>
            <person name="Kana A."/>
            <person name="Doucette-Stamm L."/>
            <person name="Weinstock K."/>
            <person name="Fechtel K."/>
            <person name="Weiss R.B."/>
            <person name="Dunn D.M."/>
            <person name="Green E.D."/>
            <person name="Blakesley R.W."/>
            <person name="Bouffard G.G."/>
            <person name="De Jong P.J."/>
            <person name="Osoegawa K."/>
            <person name="Zhu B."/>
            <person name="Marra M."/>
            <person name="Schein J."/>
            <person name="Bosdet I."/>
            <person name="Fjell C."/>
            <person name="Jones S."/>
            <person name="Krzywinski M."/>
            <person name="Mathewson C."/>
            <person name="Siddiqui A."/>
            <person name="Wye N."/>
            <person name="McPherson J."/>
            <person name="Zhao S."/>
            <person name="Fraser C.M."/>
            <person name="Shetty J."/>
            <person name="Shatsman S."/>
            <person name="Geer K."/>
            <person name="Chen Y."/>
            <person name="Abramzon S."/>
            <person name="Nierman W.C."/>
            <person name="Havlak P.H."/>
            <person name="Chen R."/>
            <person name="Durbin K.J."/>
            <person name="Egan A."/>
            <person name="Ren Y."/>
            <person name="Song X.-Z."/>
            <person name="Li B."/>
            <person name="Liu Y."/>
            <person name="Qin X."/>
            <person name="Cawley S."/>
            <person name="Cooney A.J."/>
            <person name="D'Souza L.M."/>
            <person name="Martin K."/>
            <person name="Wu J.Q."/>
            <person name="Gonzalez-Garay M.L."/>
            <person name="Jackson A.R."/>
            <person name="Kalafus K.J."/>
            <person name="McLeod M.P."/>
            <person name="Milosavljevic A."/>
            <person name="Virk D."/>
            <person name="Volkov A."/>
            <person name="Wheeler D.A."/>
            <person name="Zhang Z."/>
            <person name="Bailey J.A."/>
            <person name="Eichler E.E."/>
            <person name="Tuzun E."/>
            <person name="Birney E."/>
            <person name="Mongin E."/>
            <person name="Ureta-Vidal A."/>
            <person name="Woodwark C."/>
            <person name="Zdobnov E."/>
            <person name="Bork P."/>
            <person name="Suyama M."/>
            <person name="Torrents D."/>
            <person name="Alexandersson M."/>
            <person name="Trask B.J."/>
            <person name="Young J.M."/>
            <person name="Huang H."/>
            <person name="Wang H."/>
            <person name="Xing H."/>
            <person name="Daniels S."/>
            <person name="Gietzen D."/>
            <person name="Schmidt J."/>
            <person name="Stevens K."/>
            <person name="Vitt U."/>
            <person name="Wingrove J."/>
            <person name="Camara F."/>
            <person name="Mar Alba M."/>
            <person name="Abril J.F."/>
            <person name="Guigo R."/>
            <person name="Smit A."/>
            <person name="Dubchak I."/>
            <person name="Rubin E.M."/>
            <person name="Couronne O."/>
            <person name="Poliakov A."/>
            <person name="Huebner N."/>
            <person name="Ganten D."/>
            <person name="Goesele C."/>
            <person name="Hummel O."/>
            <person name="Kreitler T."/>
            <person name="Lee Y.-A."/>
            <person name="Monti J."/>
            <person name="Schulz H."/>
            <person name="Zimdahl H."/>
            <person name="Himmelbauer H."/>
            <person name="Lehrach H."/>
            <person name="Jacob H.J."/>
            <person name="Bromberg S."/>
            <person name="Gullings-Handley J."/>
            <person name="Jensen-Seaman M.I."/>
            <person name="Kwitek A.E."/>
            <person name="Lazar J."/>
            <person name="Pasko D."/>
            <person name="Tonellato P.J."/>
            <person name="Twigger S."/>
            <person name="Ponting C.P."/>
            <person name="Duarte J.M."/>
            <person name="Rice S."/>
            <person name="Goodstadt L."/>
            <person name="Beatson S.A."/>
            <person name="Emes R.D."/>
            <person name="Winter E.E."/>
            <person name="Webber C."/>
            <person name="Brandt P."/>
            <person name="Nyakatura G."/>
            <person name="Adetobi M."/>
            <person name="Chiaromonte F."/>
            <person name="Elnitski L."/>
            <person name="Eswara P."/>
            <person name="Hardison R.C."/>
            <person name="Hou M."/>
            <person name="Kolbe D."/>
            <person name="Makova K."/>
            <person name="Miller W."/>
            <person name="Nekrutenko A."/>
            <person name="Riemer C."/>
            <person name="Schwartz S."/>
            <person name="Taylor J."/>
            <person name="Yang S."/>
            <person name="Zhang Y."/>
            <person name="Lindpaintner K."/>
            <person name="Andrews T.D."/>
            <person name="Caccamo M."/>
            <person name="Clamp M."/>
            <person name="Clarke L."/>
            <person name="Curwen V."/>
            <person name="Durbin R.M."/>
            <person name="Eyras E."/>
            <person name="Searle S.M."/>
            <person name="Cooper G.M."/>
            <person name="Batzoglou S."/>
            <person name="Brudno M."/>
            <person name="Sidow A."/>
            <person name="Stone E.A."/>
            <person name="Payseur B.A."/>
            <person name="Bourque G."/>
            <person name="Lopez-Otin C."/>
            <person name="Puente X.S."/>
            <person name="Chakrabarti K."/>
            <person name="Chatterji S."/>
            <person name="Dewey C."/>
            <person name="Pachter L."/>
            <person name="Bray N."/>
            <person name="Yap V.B."/>
            <person name="Caspi A."/>
            <person name="Tesler G."/>
            <person name="Pevzner P.A."/>
            <person name="Haussler D."/>
            <person name="Roskin K.M."/>
            <person name="Baertsch R."/>
            <person name="Clawson H."/>
            <person name="Furey T.S."/>
            <person name="Hinrichs A.S."/>
            <person name="Karolchik D."/>
            <person name="Kent W.J."/>
            <person name="Rosenbloom K.R."/>
            <person name="Trumbower H."/>
            <person name="Weirauch M."/>
            <person name="Cooper D.N."/>
            <person name="Stenson P.D."/>
            <person name="Ma B."/>
            <person name="Brent M."/>
            <person name="Arumugam M."/>
            <person name="Shteynberg D."/>
            <person name="Copley R.R."/>
            <person name="Taylor M.S."/>
            <person name="Riethman H."/>
            <person name="Mudunuri U."/>
            <person name="Peterson J."/>
            <person name="Guyer M."/>
            <person name="Felsenfeld A."/>
            <person name="Old S."/>
            <person name="Mockrin S."/>
            <person name="Collins F.S."/>
        </authorList>
    </citation>
    <scope>NUCLEOTIDE SEQUENCE [LARGE SCALE GENOMIC DNA]</scope>
    <source>
        <strain>Brown Norway</strain>
    </source>
</reference>
<reference key="2">
    <citation type="submission" date="2005-09" db="EMBL/GenBank/DDBJ databases">
        <authorList>
            <person name="Mural R.J."/>
            <person name="Li P.W."/>
            <person name="Adams M.D."/>
            <person name="Amanatides P.G."/>
            <person name="Baden-Tillson H."/>
            <person name="Barnstead M."/>
            <person name="Chin S.H."/>
            <person name="Dew I."/>
            <person name="Evans C.A."/>
            <person name="Ferriera S."/>
            <person name="Flanigan M."/>
            <person name="Fosler C."/>
            <person name="Glodek A."/>
            <person name="Gu Z."/>
            <person name="Holt R.A."/>
            <person name="Jennings D."/>
            <person name="Kraft C.L."/>
            <person name="Lu F."/>
            <person name="Nguyen T."/>
            <person name="Nusskern D.R."/>
            <person name="Pfannkoch C.M."/>
            <person name="Sitter C."/>
            <person name="Sutton G.G."/>
            <person name="Venter J.C."/>
            <person name="Wang Z."/>
            <person name="Woodage T."/>
            <person name="Zheng X.H."/>
            <person name="Zhong F."/>
        </authorList>
    </citation>
    <scope>NUCLEOTIDE SEQUENCE [LARGE SCALE GENOMIC DNA]</scope>
    <source>
        <strain>Brown Norway</strain>
    </source>
</reference>
<reference key="3">
    <citation type="journal article" date="2018" name="Cell Metab.">
        <title>The BCKDH Kinase and Phosphatase Integrate BCAA and Lipid Metabolism via Regulation of ATP-Citrate Lyase.</title>
        <authorList>
            <person name="White P.J."/>
            <person name="McGarrah R.W."/>
            <person name="Grimsrud P.A."/>
            <person name="Tso S.C."/>
            <person name="Yang W.H."/>
            <person name="Haldeman J.M."/>
            <person name="Grenier-Larouche T."/>
            <person name="An J."/>
            <person name="Lapworth A.L."/>
            <person name="Astapova I."/>
            <person name="Hannou S.A."/>
            <person name="George T."/>
            <person name="Arlotto M."/>
            <person name="Olson L.B."/>
            <person name="Lai M."/>
            <person name="Zhang G.F."/>
            <person name="Ilkayeva O."/>
            <person name="Herman M.A."/>
            <person name="Wynn R.M."/>
            <person name="Chuang D.T."/>
            <person name="Newgard C.B."/>
        </authorList>
    </citation>
    <scope>FUNCTION</scope>
    <scope>CATALYTIC ACTIVITY</scope>
    <scope>PATHWAY</scope>
</reference>
<evidence type="ECO:0000250" key="1">
    <source>
        <dbReference type="UniProtKB" id="Q8BXN7"/>
    </source>
</evidence>
<evidence type="ECO:0000250" key="2">
    <source>
        <dbReference type="UniProtKB" id="Q8N3J5"/>
    </source>
</evidence>
<evidence type="ECO:0000255" key="3"/>
<evidence type="ECO:0000255" key="4">
    <source>
        <dbReference type="PROSITE-ProRule" id="PRU01082"/>
    </source>
</evidence>
<evidence type="ECO:0000269" key="5">
    <source>
    </source>
</evidence>
<evidence type="ECO:0000305" key="6">
    <source>
    </source>
</evidence>
<protein>
    <recommendedName>
        <fullName>Protein phosphatase Mn(2+)-dependent 1K</fullName>
        <ecNumber evidence="5">3.1.3.16</ecNumber>
    </recommendedName>
    <alternativeName>
        <fullName evidence="2">Branched-chain alpha-ketoacid dehydrogenase phosphatase</fullName>
        <shortName evidence="2">BCKDH</shortName>
        <shortName evidence="2">BDP</shortName>
    </alternativeName>
    <alternativeName>
        <fullName evidence="2">Protein phosphatase 2C family member</fullName>
    </alternativeName>
    <alternativeName>
        <fullName>[3-methyl-2-oxobutanoate dehydrogenase (2-methylpropanoyl-transferring)]-phosphatase</fullName>
        <ecNumber evidence="5">3.1.3.52</ecNumber>
    </alternativeName>
</protein>
<accession>A6K136</accession>
<accession>D4A7X5</accession>